<evidence type="ECO:0000250" key="1"/>
<evidence type="ECO:0000255" key="2"/>
<evidence type="ECO:0000256" key="3">
    <source>
        <dbReference type="SAM" id="MobiDB-lite"/>
    </source>
</evidence>
<evidence type="ECO:0000269" key="4">
    <source>
    </source>
</evidence>
<evidence type="ECO:0000269" key="5">
    <source>
    </source>
</evidence>
<evidence type="ECO:0000269" key="6">
    <source>
    </source>
</evidence>
<evidence type="ECO:0000269" key="7">
    <source>
    </source>
</evidence>
<evidence type="ECO:0000269" key="8">
    <source>
    </source>
</evidence>
<evidence type="ECO:0000269" key="9">
    <source>
    </source>
</evidence>
<evidence type="ECO:0000269" key="10">
    <source>
    </source>
</evidence>
<evidence type="ECO:0000269" key="11">
    <source>
    </source>
</evidence>
<evidence type="ECO:0000269" key="12">
    <source>
    </source>
</evidence>
<evidence type="ECO:0000305" key="13"/>
<evidence type="ECO:0007829" key="14">
    <source>
        <dbReference type="PDB" id="2MJ2"/>
    </source>
</evidence>
<evidence type="ECO:0007829" key="15">
    <source>
        <dbReference type="PDB" id="5NHQ"/>
    </source>
</evidence>
<sequence length="71" mass="8081">MVLRQLSRKASVKVSKTWSGTKKRAQRILIFLLEFLLDFCTGEDSVDGKKRQRHSGLTEQTYSALPEPKAT</sequence>
<comment type="function">
    <text evidence="5 7 12">Alters the structure of the nuclear envelope by interacting with host CBX5 and disrupting CBX5 association with LBR. Involved in the perinuclear-nuclear localization of the capsid protein VP1 during virion assembly and maturation. Plays an important role in the release of progeny virions from infected cells and in viral propagation, probably by acting as a viral ionic channel in the host plasma membrane. Allows influx of extracellular calcium ions in the host cell. May contribute to viral genome transcription and translation of viral late proteins.</text>
</comment>
<comment type="subunit">
    <text evidence="1 4 6 7 8 9 11 12">Homooligomer. Interacts with VP1 (By similarity). Interacts with large T antigen; this interaction may impact upon the activity of T-antigen on the control of viral gene transcription and replication. Interacts with small t antigen. Interacts with host PP2A subunits for dephosphorylation. Interacts (via N-terminus) with host YBX1; this interaction modulates transcriptional activity genomic promoters. Interacts (via N-terminus) with host TP53. Interacts with host FEZ1; this interaction disrupts the association between FEZ1 and microtubules. Interacts with host CBX5; this interaction induces the dissociation of CBX5 from LBR, resulting in destabilization of the nuclear envelope.</text>
</comment>
<comment type="subcellular location">
    <subcellularLocation>
        <location evidence="13">Host cytoplasm</location>
    </subcellularLocation>
    <subcellularLocation>
        <location evidence="13">Host nucleus membrane</location>
        <topology evidence="13">Single-pass type II membrane protein</topology>
    </subcellularLocation>
    <subcellularLocation>
        <location evidence="13">Host rough endoplasmic reticulum membrane</location>
        <topology evidence="13">Single-pass type II membrane protein</topology>
    </subcellularLocation>
    <subcellularLocation>
        <location evidence="13">Host cell membrane</location>
        <topology evidence="13">Single-pass type II membrane protein</topology>
    </subcellularLocation>
    <text evidence="5 9 12">Mostly perinuclear.</text>
</comment>
<comment type="alternative products">
    <event type="alternative splicing"/>
    <event type="alternative initiation"/>
    <isoform>
        <id>P03086-1</id>
        <name>Agno</name>
        <sequence type="displayed"/>
    </isoform>
    <isoform>
        <id>P03089-1</id>
        <name>VP1</name>
        <name>Major capsid protein VP1</name>
        <sequence type="external"/>
    </isoform>
    <isoform>
        <id>P03095-1</id>
        <name>VP2</name>
        <name>Minor capsid protein VP2</name>
        <sequence type="external"/>
    </isoform>
    <isoform>
        <id>P03095-2</id>
        <name>VP3</name>
        <name>Minor capsid protein VP3</name>
        <sequence type="external"/>
    </isoform>
    <isoform>
        <id>P03095-3</id>
        <name>VP4</name>
        <name>Viroporin VP4</name>
        <sequence type="external"/>
    </isoform>
</comment>
<comment type="PTM">
    <text evidence="1">Phosphorylated by host PKC. Phosphorylation alters the stability and may also have an impact on the subcellular location (By similarity).</text>
</comment>
<comment type="miscellaneous">
    <molecule>Isoform Agno</molecule>
    <text>Produced by alternative initiation of the late mRNA.</text>
</comment>
<comment type="similarity">
    <text evidence="13">Belongs to the polyomavirus agnoprotein family.</text>
</comment>
<keyword id="KW-0002">3D-structure</keyword>
<keyword id="KW-0024">Alternative initiation</keyword>
<keyword id="KW-0025">Alternative splicing</keyword>
<keyword id="KW-1032">Host cell membrane</keyword>
<keyword id="KW-1035">Host cytoplasm</keyword>
<keyword id="KW-1038">Host endoplasmic reticulum</keyword>
<keyword id="KW-1043">Host membrane</keyword>
<keyword id="KW-1048">Host nucleus</keyword>
<keyword id="KW-0945">Host-virus interaction</keyword>
<keyword id="KW-0407">Ion channel</keyword>
<keyword id="KW-0406">Ion transport</keyword>
<keyword id="KW-0472">Membrane</keyword>
<keyword id="KW-0597">Phosphoprotein</keyword>
<keyword id="KW-1185">Reference proteome</keyword>
<keyword id="KW-0735">Signal-anchor</keyword>
<keyword id="KW-0812">Transmembrane</keyword>
<keyword id="KW-1133">Transmembrane helix</keyword>
<keyword id="KW-0813">Transport</keyword>
<keyword id="KW-1182">Viral ion channel</keyword>
<organismHost>
    <name type="scientific">Homo sapiens</name>
    <name type="common">Human</name>
    <dbReference type="NCBI Taxonomy" id="9606"/>
</organismHost>
<accession>P03086</accession>
<dbReference type="EMBL" id="J02226">
    <property type="protein sequence ID" value="AAA82098.1"/>
    <property type="molecule type" value="Genomic_DNA"/>
</dbReference>
<dbReference type="PIR" id="A03623">
    <property type="entry name" value="DNVPJ"/>
</dbReference>
<dbReference type="RefSeq" id="NP_043508.1">
    <molecule id="P03086-1"/>
    <property type="nucleotide sequence ID" value="NC_001699.1"/>
</dbReference>
<dbReference type="PDB" id="2MJ2">
    <property type="method" value="NMR"/>
    <property type="chains" value="A=17-52"/>
</dbReference>
<dbReference type="PDB" id="5NHQ">
    <property type="method" value="NMR"/>
    <property type="chains" value="A=1-71"/>
</dbReference>
<dbReference type="PDBsum" id="2MJ2"/>
<dbReference type="PDBsum" id="5NHQ"/>
<dbReference type="BMRB" id="P03086"/>
<dbReference type="SMR" id="P03086"/>
<dbReference type="TCDB" id="1.A.96.1.1">
    <property type="family name" value="the human polyoma virus viroporin (pvvp) family"/>
</dbReference>
<dbReference type="iPTMnet" id="P03086"/>
<dbReference type="DNASU" id="1489519"/>
<dbReference type="GeneID" id="1489519"/>
<dbReference type="KEGG" id="vg:1489519"/>
<dbReference type="OrthoDB" id="39739at10239"/>
<dbReference type="EvolutionaryTrace" id="P03086"/>
<dbReference type="Proteomes" id="UP000008478">
    <property type="component" value="Genome"/>
</dbReference>
<dbReference type="GO" id="GO:0044200">
    <property type="term" value="C:host cell nuclear membrane"/>
    <property type="evidence" value="ECO:0007669"/>
    <property type="project" value="UniProtKB-SubCell"/>
</dbReference>
<dbReference type="GO" id="GO:0020002">
    <property type="term" value="C:host cell plasma membrane"/>
    <property type="evidence" value="ECO:0007669"/>
    <property type="project" value="UniProtKB-SubCell"/>
</dbReference>
<dbReference type="GO" id="GO:0044169">
    <property type="term" value="C:host cell rough endoplasmic reticulum membrane"/>
    <property type="evidence" value="ECO:0007669"/>
    <property type="project" value="UniProtKB-SubCell"/>
</dbReference>
<dbReference type="GO" id="GO:0016020">
    <property type="term" value="C:membrane"/>
    <property type="evidence" value="ECO:0007669"/>
    <property type="project" value="UniProtKB-KW"/>
</dbReference>
<dbReference type="GO" id="GO:0015267">
    <property type="term" value="F:channel activity"/>
    <property type="evidence" value="ECO:0007669"/>
    <property type="project" value="UniProtKB-KW"/>
</dbReference>
<dbReference type="GO" id="GO:0003677">
    <property type="term" value="F:DNA binding"/>
    <property type="evidence" value="ECO:0007669"/>
    <property type="project" value="InterPro"/>
</dbReference>
<dbReference type="GO" id="GO:0034220">
    <property type="term" value="P:monoatomic ion transmembrane transport"/>
    <property type="evidence" value="ECO:0007669"/>
    <property type="project" value="UniProtKB-KW"/>
</dbReference>
<dbReference type="InterPro" id="IPR002643">
    <property type="entry name" value="Polyoma_agno"/>
</dbReference>
<dbReference type="Pfam" id="PF01736">
    <property type="entry name" value="Polyoma_agno"/>
    <property type="match status" value="1"/>
</dbReference>
<proteinExistence type="evidence at protein level"/>
<name>AGNO_POVJC</name>
<feature type="chain" id="PRO_0000115033" description="Agnoprotein">
    <location>
        <begin position="1"/>
        <end position="71"/>
    </location>
</feature>
<feature type="topological domain" description="Cytoplasmic" evidence="2">
    <location>
        <begin position="1"/>
        <end position="27"/>
    </location>
</feature>
<feature type="transmembrane region" description="Helical; Signal-anchor for type II membrane protein" evidence="2">
    <location>
        <begin position="28"/>
        <end position="44"/>
    </location>
</feature>
<feature type="topological domain" description="Extracellular" evidence="2">
    <location>
        <begin position="45"/>
        <end position="71"/>
    </location>
</feature>
<feature type="region of interest" description="Disordered" evidence="3">
    <location>
        <begin position="45"/>
        <end position="71"/>
    </location>
</feature>
<feature type="modified residue" description="Phosphoserine; by host" evidence="10">
    <location>
        <position position="7"/>
    </location>
</feature>
<feature type="modified residue" description="Phosphoserine; by host" evidence="10">
    <location>
        <position position="11"/>
    </location>
</feature>
<feature type="modified residue" description="Phosphothreonine; by host" evidence="10">
    <location>
        <position position="21"/>
    </location>
</feature>
<feature type="mutagenesis site" description="Partial loss of phosphorylation, defective in encapsidation of viral DNA; when associated with A-8 and T-21." evidence="10">
    <original>S</original>
    <variation>A</variation>
    <location>
        <position position="7"/>
    </location>
</feature>
<feature type="mutagenesis site" description="Impaired viral propagation.">
    <original>RK</original>
    <variation>AA</variation>
    <location>
        <begin position="8"/>
        <end position="9"/>
    </location>
</feature>
<feature type="mutagenesis site" description="Partial loss of phosphorylation, defective in encapsidation of viral DNA; when associated with A-7 and T-21." evidence="10">
    <original>S</original>
    <variation>A</variation>
    <location>
        <position position="11"/>
    </location>
</feature>
<feature type="mutagenesis site" description="Partial loss of phosphorylation, defective in encapsidation of viral DNA; when associated with A-7 and A-8." evidence="10">
    <original>T</original>
    <variation>A</variation>
    <location>
        <position position="21"/>
    </location>
</feature>
<feature type="helix" evidence="15">
    <location>
        <begin position="6"/>
        <end position="10"/>
    </location>
</feature>
<feature type="turn" evidence="15">
    <location>
        <begin position="11"/>
        <end position="13"/>
    </location>
</feature>
<feature type="helix" evidence="14">
    <location>
        <begin position="23"/>
        <end position="39"/>
    </location>
</feature>
<feature type="strand" evidence="14">
    <location>
        <begin position="42"/>
        <end position="44"/>
    </location>
</feature>
<feature type="strand" evidence="15">
    <location>
        <begin position="51"/>
        <end position="53"/>
    </location>
</feature>
<reference key="1">
    <citation type="journal article" date="1984" name="J. Virol.">
        <title>Human polyomavirus JC virus genome.</title>
        <authorList>
            <person name="Frisque R.J."/>
            <person name="Bream G.L."/>
            <person name="Cannella M.T."/>
        </authorList>
    </citation>
    <scope>NUCLEOTIDE SEQUENCE [GENOMIC DNA]</scope>
</reference>
<reference key="2">
    <citation type="journal article" date="2001" name="J. Neurovirol.">
        <title>Distribution and function of JCV agnoprotein.</title>
        <authorList>
            <person name="Okada Y."/>
            <person name="Endo S."/>
            <person name="Takahashi H."/>
            <person name="Sawa H."/>
            <person name="Umemura T."/>
            <person name="Nagashima K."/>
        </authorList>
    </citation>
    <scope>SUBCELLULAR LOCATION</scope>
    <scope>FUNCTION</scope>
    <scope>PHOSPHORYLATION</scope>
</reference>
<reference key="3">
    <citation type="journal article" date="2001" name="J. Virol.">
        <title>Interaction of JC virus agno protein with T antigen modulates transcription and replication of the viral genome in glial cells.</title>
        <authorList>
            <person name="Safak M."/>
            <person name="Barrucco R."/>
            <person name="Darbinyan A."/>
            <person name="Okada Y."/>
            <person name="Nagashima K."/>
            <person name="Khalili K."/>
        </authorList>
    </citation>
    <scope>INTERACTION WITH LARGE T ANTIGEN</scope>
</reference>
<reference key="4">
    <citation type="journal article" date="2002" name="J. Virol.">
        <title>Functional interaction between JC virus late regulatory agnoprotein and cellular Y-box binding transcription factor, YB-1.</title>
        <authorList>
            <person name="Safak M."/>
            <person name="Sadowska B."/>
            <person name="Barrucco R."/>
            <person name="Khalili K."/>
        </authorList>
    </citation>
    <scope>INTERACTION WITH HOST YBX1</scope>
</reference>
<reference key="5">
    <citation type="journal article" date="2002" name="Oncogene">
        <title>Evidence for dysregulation of cell cycle by human polyomavirus, JCV, late auxiliary protein.</title>
        <authorList>
            <person name="Darbinyan A."/>
            <person name="Darbinian N."/>
            <person name="Safak M."/>
            <person name="Radhakrishnan S."/>
            <person name="Giordano A."/>
            <person name="Khalili K."/>
        </authorList>
    </citation>
    <scope>INTERACTION WITH HOST TP53</scope>
    <scope>FUNCTION</scope>
</reference>
<reference key="6">
    <citation type="journal article" date="2005" name="J. Biol. Chem.">
        <title>Identification of FEZ1 as a protein that interacts with JC virus agnoprotein and microtubules: role of agnoprotein-induced dissociation of FEZ1 from microtubules in viral propagation.</title>
        <authorList>
            <person name="Suzuki T."/>
            <person name="Okada Y."/>
            <person name="Semba S."/>
            <person name="Orba Y."/>
            <person name="Yamanouchi S."/>
            <person name="Endo S."/>
            <person name="Tanaka S."/>
            <person name="Fujita T."/>
            <person name="Kuroda S."/>
            <person name="Nagashima K."/>
            <person name="Sawa H."/>
        </authorList>
    </citation>
    <scope>INTERACTION WITH HOST FEZ1</scope>
</reference>
<reference key="7">
    <citation type="journal article" date="2005" name="EMBO Rep.">
        <title>Dissociation of heterochromatin protein 1 from lamin B receptor induced by human polyomavirus agnoprotein: role in nuclear egress of viral particles.</title>
        <authorList>
            <person name="Okada Y."/>
            <person name="Suzuki T."/>
            <person name="Sunden Y."/>
            <person name="Orba Y."/>
            <person name="Kose S."/>
            <person name="Imamoto N."/>
            <person name="Takahashi H."/>
            <person name="Tanaka S."/>
            <person name="Hall W.W."/>
            <person name="Nagashima K."/>
            <person name="Sawa H."/>
        </authorList>
    </citation>
    <scope>INTERACTION WITH HUMAN CBX5</scope>
    <scope>SUBCELLULAR LOCATION</scope>
</reference>
<reference key="8">
    <citation type="journal article" date="2006" name="J. Virol.">
        <title>Phosphorylation mutants of JC virus agnoprotein are unable to sustain the viral infection cycle.</title>
        <authorList>
            <person name="Sariyer I.K."/>
            <person name="Akan I."/>
            <person name="Palermo V."/>
            <person name="Gordon J."/>
            <person name="Khalili K."/>
            <person name="Safak M."/>
        </authorList>
    </citation>
    <scope>MUTAGENESIS OF SER-7; SER-11 AND THR-21</scope>
    <scope>PHOSPHORYLATION AT SER-7; SER-11 AND THR-21</scope>
</reference>
<reference key="9">
    <citation type="journal article" date="2008" name="Virology">
        <title>Dephosphorylation of JC virus agnoprotein by protein phosphatase 2A: inhibition by small t antigen.</title>
        <authorList>
            <person name="Sariyer I.K."/>
            <person name="Khalili K."/>
            <person name="Safak M."/>
        </authorList>
    </citation>
    <scope>INTERACTION WITH SMALL T ANTIGEN AND HOST PP2A</scope>
</reference>
<reference key="10">
    <citation type="journal article" date="2010" name="PLoS Pathog.">
        <title>The human polyoma JC virus agnoprotein acts as a viroporin.</title>
        <authorList>
            <person name="Suzuki T."/>
            <person name="Orba Y."/>
            <person name="Okada Y."/>
            <person name="Sunden Y."/>
            <person name="Kimura T."/>
            <person name="Tanaka S."/>
            <person name="Nagashima K."/>
            <person name="Hall W.W."/>
            <person name="Sawa H."/>
        </authorList>
    </citation>
    <scope>FUNCTION</scope>
    <scope>SUBUNIT</scope>
    <scope>SUBCELLULAR LOCATION</scope>
    <scope>MUTATION OF 8-ARG-LYS-9</scope>
</reference>
<organism>
    <name type="scientific">JC polyomavirus</name>
    <name type="common">JCPyV</name>
    <name type="synonym">JCV</name>
    <dbReference type="NCBI Taxonomy" id="10632"/>
    <lineage>
        <taxon>Viruses</taxon>
        <taxon>Monodnaviria</taxon>
        <taxon>Shotokuvirae</taxon>
        <taxon>Cossaviricota</taxon>
        <taxon>Papovaviricetes</taxon>
        <taxon>Sepolyvirales</taxon>
        <taxon>Polyomaviridae</taxon>
        <taxon>Betapolyomavirus</taxon>
        <taxon>Betapolyomavirus secuhominis</taxon>
    </lineage>
</organism>
<protein>
    <recommendedName>
        <fullName>Agnoprotein</fullName>
    </recommendedName>
    <alternativeName>
        <fullName>Agno</fullName>
    </alternativeName>
</protein>